<feature type="chain" id="PRO_1000090217" description="Cobyrinate a,c-diamide synthase">
    <location>
        <begin position="1"/>
        <end position="454"/>
    </location>
</feature>
<feature type="domain" description="GATase cobBQ-type" evidence="1">
    <location>
        <begin position="244"/>
        <end position="440"/>
    </location>
</feature>
<feature type="active site" description="Nucleophile" evidence="1">
    <location>
        <position position="326"/>
    </location>
</feature>
<feature type="site" description="Increases nucleophilicity of active site Cys" evidence="1">
    <location>
        <position position="432"/>
    </location>
</feature>
<protein>
    <recommendedName>
        <fullName evidence="1">Cobyrinate a,c-diamide synthase</fullName>
        <ecNumber evidence="1">6.3.5.11</ecNumber>
    </recommendedName>
    <alternativeName>
        <fullName evidence="1">Cobyrinic acid a,c-diamide synthetase</fullName>
    </alternativeName>
</protein>
<proteinExistence type="inferred from homology"/>
<gene>
    <name evidence="1" type="primary">cbiA</name>
    <name type="ordered locus">LAR_1610</name>
</gene>
<accession>B2G9J4</accession>
<organism>
    <name type="scientific">Limosilactobacillus reuteri subsp. reuteri (strain JCM 1112)</name>
    <name type="common">Lactobacillus reuteri</name>
    <dbReference type="NCBI Taxonomy" id="557433"/>
    <lineage>
        <taxon>Bacteria</taxon>
        <taxon>Bacillati</taxon>
        <taxon>Bacillota</taxon>
        <taxon>Bacilli</taxon>
        <taxon>Lactobacillales</taxon>
        <taxon>Lactobacillaceae</taxon>
        <taxon>Limosilactobacillus</taxon>
    </lineage>
</organism>
<sequence>MKKVLIAGVTSGSGKTTAVLGILKALNEKYTIQSYKVGPDYVDTKFHTRITNRPTRNLDNYLVPDPQVLNYLFTANTENIDLGIIEGVMGLYDGLGTDKDAYSTASIAKQLNIPVILVINARATSTSAAAILKGFIDFDKKVPIKGVIINNVMSENHYKLIAGAIHRYLDLPILGYLPHDSTISLPSRQLGLVPDDELPNVDKKIAKVAEDVKAHVDLQKLLSLATSVSEKVVDPFNIPKTRLRLGIAKDKAFNFYYADNIHLLEKTGIELIPFSPISDNHLPDVDALYFGGGYPEEFASRLAANEFLKKEVYEFSQANKPIYAECGGLMYLGKVLKQGENEFPMVGIFDGMSEMTPRLKRFGYCEAYTQVDCMLGNRGQKIVGHEFHHSMFKQLDQQLKPVLLMKKVRDNQIVDTWSGGYQIRKTFASYLHVHFYQNPKLFIQFLNNLGADVQ</sequence>
<comment type="function">
    <text evidence="1">Catalyzes the ATP-dependent amidation of the two carboxylate groups at positions a and c of cobyrinate, using either L-glutamine or ammonia as the nitrogen source.</text>
</comment>
<comment type="catalytic activity">
    <reaction evidence="1">
        <text>cob(II)yrinate + 2 L-glutamine + 2 ATP + 2 H2O = cob(II)yrinate a,c diamide + 2 L-glutamate + 2 ADP + 2 phosphate + 2 H(+)</text>
        <dbReference type="Rhea" id="RHEA:26289"/>
        <dbReference type="ChEBI" id="CHEBI:15377"/>
        <dbReference type="ChEBI" id="CHEBI:15378"/>
        <dbReference type="ChEBI" id="CHEBI:29985"/>
        <dbReference type="ChEBI" id="CHEBI:30616"/>
        <dbReference type="ChEBI" id="CHEBI:43474"/>
        <dbReference type="ChEBI" id="CHEBI:58359"/>
        <dbReference type="ChEBI" id="CHEBI:58537"/>
        <dbReference type="ChEBI" id="CHEBI:58894"/>
        <dbReference type="ChEBI" id="CHEBI:456216"/>
        <dbReference type="EC" id="6.3.5.11"/>
    </reaction>
</comment>
<comment type="cofactor">
    <cofactor evidence="1">
        <name>Mg(2+)</name>
        <dbReference type="ChEBI" id="CHEBI:18420"/>
    </cofactor>
</comment>
<comment type="pathway">
    <text evidence="1">Cofactor biosynthesis; adenosylcobalamin biosynthesis; cob(II)yrinate a,c-diamide from sirohydrochlorin (anaerobic route): step 10/10.</text>
</comment>
<comment type="domain">
    <text evidence="1">Comprises of two domains. The C-terminal domain contains the binding site for glutamine and catalyzes the hydrolysis of this substrate to glutamate and ammonia. The N-terminal domain is anticipated to bind ATP and cobyrinate and catalyzes the ultimate synthesis of the diamide product. The ammonia produced via the glutaminase domain is probably translocated to the adjacent domain via a molecular tunnel, where it reacts with an activated intermediate.</text>
</comment>
<comment type="miscellaneous">
    <text evidence="1">The a and c carboxylates of cobyrinate are activated for nucleophilic attack via formation of a phosphorylated intermediate by ATP. CbiA catalyzes first the amidation of the c-carboxylate, and then that of the a-carboxylate.</text>
</comment>
<comment type="similarity">
    <text evidence="1">Belongs to the CobB/CbiA family.</text>
</comment>
<reference key="1">
    <citation type="journal article" date="2008" name="DNA Res.">
        <title>Comparative genome analysis of Lactobacillus reuteri and Lactobacillus fermentum reveal a genomic island for reuterin and cobalamin production.</title>
        <authorList>
            <person name="Morita H."/>
            <person name="Toh H."/>
            <person name="Fukuda S."/>
            <person name="Horikawa H."/>
            <person name="Oshima K."/>
            <person name="Suzuki T."/>
            <person name="Murakami M."/>
            <person name="Hisamatsu S."/>
            <person name="Kato Y."/>
            <person name="Takizawa T."/>
            <person name="Fukuoka H."/>
            <person name="Yoshimura T."/>
            <person name="Itoh K."/>
            <person name="O'Sullivan D.J."/>
            <person name="McKay L.L."/>
            <person name="Ohno H."/>
            <person name="Kikuchi J."/>
            <person name="Masaoka T."/>
            <person name="Hattori M."/>
        </authorList>
    </citation>
    <scope>NUCLEOTIDE SEQUENCE [LARGE SCALE GENOMIC DNA]</scope>
    <source>
        <strain>JCM 1112</strain>
    </source>
</reference>
<name>CBIA_LIMRJ</name>
<keyword id="KW-0067">ATP-binding</keyword>
<keyword id="KW-0169">Cobalamin biosynthesis</keyword>
<keyword id="KW-0315">Glutamine amidotransferase</keyword>
<keyword id="KW-0436">Ligase</keyword>
<keyword id="KW-0460">Magnesium</keyword>
<keyword id="KW-0547">Nucleotide-binding</keyword>
<dbReference type="EC" id="6.3.5.11" evidence="1"/>
<dbReference type="EMBL" id="AP007281">
    <property type="protein sequence ID" value="BAG26126.1"/>
    <property type="molecule type" value="Genomic_DNA"/>
</dbReference>
<dbReference type="RefSeq" id="WP_003669156.1">
    <property type="nucleotide sequence ID" value="NC_010609.1"/>
</dbReference>
<dbReference type="SMR" id="B2G9J4"/>
<dbReference type="KEGG" id="lrf:LAR_1610"/>
<dbReference type="HOGENOM" id="CLU_022752_2_0_9"/>
<dbReference type="UniPathway" id="UPA00148">
    <property type="reaction ID" value="UER00231"/>
</dbReference>
<dbReference type="GO" id="GO:0005524">
    <property type="term" value="F:ATP binding"/>
    <property type="evidence" value="ECO:0007669"/>
    <property type="project" value="UniProtKB-UniRule"/>
</dbReference>
<dbReference type="GO" id="GO:0042242">
    <property type="term" value="F:cobyrinic acid a,c-diamide synthase activity"/>
    <property type="evidence" value="ECO:0007669"/>
    <property type="project" value="UniProtKB-UniRule"/>
</dbReference>
<dbReference type="GO" id="GO:0009236">
    <property type="term" value="P:cobalamin biosynthetic process"/>
    <property type="evidence" value="ECO:0007669"/>
    <property type="project" value="UniProtKB-UniRule"/>
</dbReference>
<dbReference type="CDD" id="cd03130">
    <property type="entry name" value="GATase1_CobB"/>
    <property type="match status" value="1"/>
</dbReference>
<dbReference type="Gene3D" id="3.40.50.880">
    <property type="match status" value="1"/>
</dbReference>
<dbReference type="Gene3D" id="3.40.50.300">
    <property type="entry name" value="P-loop containing nucleotide triphosphate hydrolases"/>
    <property type="match status" value="1"/>
</dbReference>
<dbReference type="HAMAP" id="MF_00027">
    <property type="entry name" value="CobB_CbiA"/>
    <property type="match status" value="1"/>
</dbReference>
<dbReference type="InterPro" id="IPR004484">
    <property type="entry name" value="CbiA/CobB_synth"/>
</dbReference>
<dbReference type="InterPro" id="IPR029062">
    <property type="entry name" value="Class_I_gatase-like"/>
</dbReference>
<dbReference type="InterPro" id="IPR002586">
    <property type="entry name" value="CobQ/CobB/MinD/ParA_Nub-bd_dom"/>
</dbReference>
<dbReference type="InterPro" id="IPR011698">
    <property type="entry name" value="GATase_3"/>
</dbReference>
<dbReference type="InterPro" id="IPR027417">
    <property type="entry name" value="P-loop_NTPase"/>
</dbReference>
<dbReference type="NCBIfam" id="TIGR00379">
    <property type="entry name" value="cobB"/>
    <property type="match status" value="1"/>
</dbReference>
<dbReference type="NCBIfam" id="NF002204">
    <property type="entry name" value="PRK01077.1"/>
    <property type="match status" value="1"/>
</dbReference>
<dbReference type="PANTHER" id="PTHR43873">
    <property type="entry name" value="COBYRINATE A,C-DIAMIDE SYNTHASE"/>
    <property type="match status" value="1"/>
</dbReference>
<dbReference type="PANTHER" id="PTHR43873:SF1">
    <property type="entry name" value="COBYRINATE A,C-DIAMIDE SYNTHASE"/>
    <property type="match status" value="1"/>
</dbReference>
<dbReference type="Pfam" id="PF01656">
    <property type="entry name" value="CbiA"/>
    <property type="match status" value="1"/>
</dbReference>
<dbReference type="Pfam" id="PF07685">
    <property type="entry name" value="GATase_3"/>
    <property type="match status" value="1"/>
</dbReference>
<dbReference type="SUPFAM" id="SSF52317">
    <property type="entry name" value="Class I glutamine amidotransferase-like"/>
    <property type="match status" value="1"/>
</dbReference>
<dbReference type="SUPFAM" id="SSF52540">
    <property type="entry name" value="P-loop containing nucleoside triphosphate hydrolases"/>
    <property type="match status" value="1"/>
</dbReference>
<dbReference type="PROSITE" id="PS51274">
    <property type="entry name" value="GATASE_COBBQ"/>
    <property type="match status" value="1"/>
</dbReference>
<evidence type="ECO:0000255" key="1">
    <source>
        <dbReference type="HAMAP-Rule" id="MF_00027"/>
    </source>
</evidence>